<dbReference type="EMBL" id="Z23164">
    <property type="protein sequence ID" value="CAA80683.1"/>
    <property type="molecule type" value="Genomic_DNA"/>
</dbReference>
<dbReference type="PIR" id="S38459">
    <property type="entry name" value="S38459"/>
</dbReference>
<dbReference type="SMR" id="Q23697"/>
<dbReference type="VEuPathDB" id="TriTrypDB:CFAC1_060019500"/>
<dbReference type="GO" id="GO:0000781">
    <property type="term" value="C:chromosome, telomeric region"/>
    <property type="evidence" value="ECO:0007669"/>
    <property type="project" value="TreeGrafter"/>
</dbReference>
<dbReference type="GO" id="GO:0005662">
    <property type="term" value="C:DNA replication factor A complex"/>
    <property type="evidence" value="ECO:0007669"/>
    <property type="project" value="TreeGrafter"/>
</dbReference>
<dbReference type="GO" id="GO:0035861">
    <property type="term" value="C:site of double-strand break"/>
    <property type="evidence" value="ECO:0007669"/>
    <property type="project" value="TreeGrafter"/>
</dbReference>
<dbReference type="GO" id="GO:0003697">
    <property type="term" value="F:single-stranded DNA binding"/>
    <property type="evidence" value="ECO:0007669"/>
    <property type="project" value="TreeGrafter"/>
</dbReference>
<dbReference type="GO" id="GO:0006260">
    <property type="term" value="P:DNA replication"/>
    <property type="evidence" value="ECO:0007669"/>
    <property type="project" value="UniProtKB-KW"/>
</dbReference>
<dbReference type="GO" id="GO:0000724">
    <property type="term" value="P:double-strand break repair via homologous recombination"/>
    <property type="evidence" value="ECO:0007669"/>
    <property type="project" value="TreeGrafter"/>
</dbReference>
<dbReference type="GO" id="GO:0006289">
    <property type="term" value="P:nucleotide-excision repair"/>
    <property type="evidence" value="ECO:0007669"/>
    <property type="project" value="TreeGrafter"/>
</dbReference>
<dbReference type="CDD" id="cd04478">
    <property type="entry name" value="RPA2_DBD_D"/>
    <property type="match status" value="1"/>
</dbReference>
<dbReference type="FunFam" id="2.40.50.140:FF:000455">
    <property type="entry name" value="Replication Factor A 28 kDa subunit, putative"/>
    <property type="match status" value="1"/>
</dbReference>
<dbReference type="Gene3D" id="2.40.50.140">
    <property type="entry name" value="Nucleic acid-binding proteins"/>
    <property type="match status" value="1"/>
</dbReference>
<dbReference type="Gene3D" id="1.10.10.10">
    <property type="entry name" value="Winged helix-like DNA-binding domain superfamily/Winged helix DNA-binding domain"/>
    <property type="match status" value="1"/>
</dbReference>
<dbReference type="InterPro" id="IPR012340">
    <property type="entry name" value="NA-bd_OB-fold"/>
</dbReference>
<dbReference type="InterPro" id="IPR040260">
    <property type="entry name" value="RFA2-like"/>
</dbReference>
<dbReference type="InterPro" id="IPR014646">
    <property type="entry name" value="Rfa2/RPA32"/>
</dbReference>
<dbReference type="InterPro" id="IPR014892">
    <property type="entry name" value="RPA_C"/>
</dbReference>
<dbReference type="InterPro" id="IPR036388">
    <property type="entry name" value="WH-like_DNA-bd_sf"/>
</dbReference>
<dbReference type="PANTHER" id="PTHR13989">
    <property type="entry name" value="REPLICATION PROTEIN A-RELATED"/>
    <property type="match status" value="1"/>
</dbReference>
<dbReference type="PANTHER" id="PTHR13989:SF16">
    <property type="entry name" value="REPLICATION PROTEIN A2"/>
    <property type="match status" value="1"/>
</dbReference>
<dbReference type="Pfam" id="PF08784">
    <property type="entry name" value="RPA_C"/>
    <property type="match status" value="1"/>
</dbReference>
<dbReference type="PIRSF" id="PIRSF036949">
    <property type="entry name" value="RPA32"/>
    <property type="match status" value="1"/>
</dbReference>
<dbReference type="SUPFAM" id="SSF50249">
    <property type="entry name" value="Nucleic acid-binding proteins"/>
    <property type="match status" value="1"/>
</dbReference>
<gene>
    <name type="primary">RPA2</name>
</gene>
<organism>
    <name type="scientific">Crithidia fasciculata</name>
    <dbReference type="NCBI Taxonomy" id="5656"/>
    <lineage>
        <taxon>Eukaryota</taxon>
        <taxon>Discoba</taxon>
        <taxon>Euglenozoa</taxon>
        <taxon>Kinetoplastea</taxon>
        <taxon>Metakinetoplastina</taxon>
        <taxon>Trypanosomatida</taxon>
        <taxon>Trypanosomatidae</taxon>
        <taxon>Leishmaniinae</taxon>
        <taxon>Crithidia</taxon>
    </lineage>
</organism>
<proteinExistence type="inferred from homology"/>
<accession>Q23697</accession>
<sequence>MLASQAGSNFSAAASSNGGQQQQQRRQHPIRPLTIKQMLEAQSVGGGVMVVDGREVTQATVVGRVVGYENANMASGGGAITAKHFGYRITDNTGMIVVRQWIDADRAQEPIPLNTHVRASGTVNVWQQSPIVTGTVVSMADSNEMNYHMLDAILTHLRLTQGNKRAAGNIGSGASVQNSAAAVGVQNMLPGGDNKVLLTDLLVSFIKQNGHGDAGMSMDELTMAAQRYSFTPGDVRTAMRTLAAEGKVYQTHDNRFNI</sequence>
<comment type="function">
    <text evidence="2">As part of the heterotrimeric replication protein A complex (RPA/RP-A), binds and stabilizes single-stranded DNA intermediates, that form during DNA replication or upon DNA stress. It prevents their reannealing and in parallel, recruits and activates different proteins and complexes involved in DNA metabolism. Thereby, it plays an essential role both in DNA replication and the cellular response to DNA damage.</text>
</comment>
<comment type="subunit">
    <text>Heterotrimer of 51, 28, and 14 kDa chains.</text>
</comment>
<comment type="subcellular location">
    <subcellularLocation>
        <location>Nucleus</location>
    </subcellularLocation>
    <subcellularLocation>
        <location>Nucleus</location>
        <location>PML body</location>
    </subcellularLocation>
    <text evidence="1">Also present in PML nuclear bodies. Redistributes to discrete nuclear foci upon DNA damage (By similarity).</text>
</comment>
<comment type="PTM">
    <text evidence="1">Phosphorylated in a cell-cycle-dependent manner (from the S phase until mitosis). Phosphorylated upon DNA damage, which promotes its translocation to nuclear foci (By similarity).</text>
</comment>
<comment type="similarity">
    <text evidence="4">Belongs to the replication factor A protein 2 family.</text>
</comment>
<feature type="chain" id="PRO_0000097269" description="Replication protein A 28 kDa subunit">
    <location>
        <begin position="1"/>
        <end position="258"/>
    </location>
</feature>
<feature type="DNA-binding region" description="OB">
    <location>
        <begin position="60"/>
        <end position="138"/>
    </location>
</feature>
<feature type="region of interest" description="Disordered" evidence="3">
    <location>
        <begin position="1"/>
        <end position="28"/>
    </location>
</feature>
<feature type="compositionally biased region" description="Low complexity" evidence="3">
    <location>
        <begin position="1"/>
        <end position="24"/>
    </location>
</feature>
<evidence type="ECO:0000250" key="1"/>
<evidence type="ECO:0000250" key="2">
    <source>
        <dbReference type="UniProtKB" id="P15927"/>
    </source>
</evidence>
<evidence type="ECO:0000256" key="3">
    <source>
        <dbReference type="SAM" id="MobiDB-lite"/>
    </source>
</evidence>
<evidence type="ECO:0000305" key="4"/>
<keyword id="KW-0235">DNA replication</keyword>
<keyword id="KW-0238">DNA-binding</keyword>
<keyword id="KW-0539">Nucleus</keyword>
<protein>
    <recommendedName>
        <fullName>Replication protein A 28 kDa subunit</fullName>
        <shortName>RP-A p28</shortName>
    </recommendedName>
    <alternativeName>
        <fullName>Replication factor A protein 2</fullName>
        <shortName>RF-A protein 2</shortName>
    </alternativeName>
</protein>
<reference key="1">
    <citation type="journal article" date="1994" name="Mol. Biochem. Parasitol.">
        <title>Isolation of the genes encoding the 51-kilodalton and 28-kilodalton subunits of Crithidia fasciculata replication protein A.</title>
        <authorList>
            <person name="Brown G.W."/>
            <person name="Hines J.C."/>
            <person name="Fisher P."/>
            <person name="Ray D.S."/>
        </authorList>
    </citation>
    <scope>NUCLEOTIDE SEQUENCE [GENOMIC DNA]</scope>
    <source>
        <strain>CfC1.1</strain>
    </source>
</reference>
<name>RFA2_CRIFA</name>